<proteinExistence type="evidence at protein level"/>
<keyword id="KW-0002">3D-structure</keyword>
<keyword id="KW-1003">Cell membrane</keyword>
<keyword id="KW-0449">Lipoprotein</keyword>
<keyword id="KW-0472">Membrane</keyword>
<keyword id="KW-0564">Palmitate</keyword>
<keyword id="KW-1185">Reference proteome</keyword>
<keyword id="KW-0732">Signal</keyword>
<evidence type="ECO:0000255" key="1">
    <source>
        <dbReference type="PROSITE-ProRule" id="PRU00303"/>
    </source>
</evidence>
<evidence type="ECO:0000305" key="2"/>
<evidence type="ECO:0007829" key="3">
    <source>
        <dbReference type="PDB" id="4BIH"/>
    </source>
</evidence>
<reference key="1">
    <citation type="book" date="2006" name="Gram positive pathogens, 2nd edition">
        <title>The Staphylococcus aureus NCTC 8325 genome.</title>
        <editorList>
            <person name="Fischetti V."/>
            <person name="Novick R."/>
            <person name="Ferretti J."/>
            <person name="Portnoy D."/>
            <person name="Rood J."/>
        </editorList>
        <authorList>
            <person name="Gillaspy A.F."/>
            <person name="Worrell V."/>
            <person name="Orvis J."/>
            <person name="Roe B.A."/>
            <person name="Dyer D.W."/>
            <person name="Iandolo J.J."/>
        </authorList>
    </citation>
    <scope>NUCLEOTIDE SEQUENCE [LARGE SCALE GENOMIC DNA]</scope>
    <source>
        <strain>NCTC 8325 / PS 47</strain>
    </source>
</reference>
<accession>Q2G1Q1</accession>
<feature type="signal peptide" evidence="1">
    <location>
        <begin position="1"/>
        <end position="23"/>
    </location>
</feature>
<feature type="chain" id="PRO_0000282084" description="Uncharacterized lipoprotein SAOUHSC_00052">
    <location>
        <begin position="24"/>
        <end position="255"/>
    </location>
</feature>
<feature type="lipid moiety-binding region" description="N-palmitoyl cysteine" evidence="1">
    <location>
        <position position="24"/>
    </location>
</feature>
<feature type="lipid moiety-binding region" description="S-diacylglycerol cysteine" evidence="1">
    <location>
        <position position="24"/>
    </location>
</feature>
<feature type="helix" evidence="3">
    <location>
        <begin position="48"/>
        <end position="53"/>
    </location>
</feature>
<feature type="strand" evidence="3">
    <location>
        <begin position="69"/>
        <end position="79"/>
    </location>
</feature>
<feature type="strand" evidence="3">
    <location>
        <begin position="85"/>
        <end position="95"/>
    </location>
</feature>
<feature type="turn" evidence="3">
    <location>
        <begin position="96"/>
        <end position="99"/>
    </location>
</feature>
<feature type="strand" evidence="3">
    <location>
        <begin position="100"/>
        <end position="110"/>
    </location>
</feature>
<feature type="strand" evidence="3">
    <location>
        <begin position="123"/>
        <end position="129"/>
    </location>
</feature>
<feature type="strand" evidence="3">
    <location>
        <begin position="134"/>
        <end position="138"/>
    </location>
</feature>
<feature type="helix" evidence="3">
    <location>
        <begin position="143"/>
        <end position="150"/>
    </location>
</feature>
<feature type="helix" evidence="3">
    <location>
        <begin position="155"/>
        <end position="158"/>
    </location>
</feature>
<feature type="strand" evidence="3">
    <location>
        <begin position="183"/>
        <end position="186"/>
    </location>
</feature>
<feature type="helix" evidence="3">
    <location>
        <begin position="192"/>
        <end position="200"/>
    </location>
</feature>
<feature type="strand" evidence="3">
    <location>
        <begin position="210"/>
        <end position="213"/>
    </location>
</feature>
<feature type="strand" evidence="3">
    <location>
        <begin position="228"/>
        <end position="235"/>
    </location>
</feature>
<feature type="strand" evidence="3">
    <location>
        <begin position="240"/>
        <end position="250"/>
    </location>
</feature>
<comment type="subcellular location">
    <subcellularLocation>
        <location evidence="1">Cell membrane</location>
        <topology evidence="1">Lipid-anchor</topology>
    </subcellularLocation>
</comment>
<comment type="similarity">
    <text evidence="2">Belongs to the staphylococcal tandem lipoprotein family.</text>
</comment>
<comment type="sequence caution" evidence="2">
    <conflict type="erroneous initiation">
        <sequence resource="EMBL-CDS" id="ABD29240"/>
    </conflict>
</comment>
<sequence length="255" mass="29656">MKRLNKLVLGIIFLFLVISITAGCGIGKEAEVKKSFEKTLSMYPIKNLEDLYDKEGYRDDQFDKNDKGTWIINSEMVIQPNNEDMVAKGMVLYMNRNTKTTNGYYYVDVTKDEDEGKPHDNEKRYPVKMVDNKIIPTKEIKDEKIKKEIENFKFFVQYGDFKNLKNYKDGDISYNPEVPSYSAKYQLTNDDYNVKQLRKRYDIPTSKAPKLLLKGSGNLKGSSVGYKDIEFTFVEKKEENIYFSDSLDYKKSGDV</sequence>
<dbReference type="EMBL" id="CP000253">
    <property type="protein sequence ID" value="ABD29240.1"/>
    <property type="status" value="ALT_INIT"/>
    <property type="molecule type" value="Genomic_DNA"/>
</dbReference>
<dbReference type="RefSeq" id="YP_498657.1">
    <property type="nucleotide sequence ID" value="NC_007795.1"/>
</dbReference>
<dbReference type="PDB" id="4BIH">
    <property type="method" value="X-ray"/>
    <property type="resolution" value="2.46 A"/>
    <property type="chains" value="A/B/C/D=23-255"/>
</dbReference>
<dbReference type="PDBsum" id="4BIH"/>
<dbReference type="SMR" id="Q2G1Q1"/>
<dbReference type="STRING" id="93061.SAOUHSC_00052"/>
<dbReference type="GeneID" id="3919084"/>
<dbReference type="KEGG" id="sao:SAOUHSC_00052"/>
<dbReference type="PATRIC" id="fig|93061.5.peg.46"/>
<dbReference type="HOGENOM" id="CLU_071589_0_1_9"/>
<dbReference type="OrthoDB" id="2189886at2"/>
<dbReference type="EvolutionaryTrace" id="Q2G1Q1"/>
<dbReference type="Proteomes" id="UP000008816">
    <property type="component" value="Chromosome"/>
</dbReference>
<dbReference type="GO" id="GO:0005886">
    <property type="term" value="C:plasma membrane"/>
    <property type="evidence" value="ECO:0007669"/>
    <property type="project" value="UniProtKB-SubCell"/>
</dbReference>
<dbReference type="Gene3D" id="2.50.20.40">
    <property type="match status" value="1"/>
</dbReference>
<dbReference type="InterPro" id="IPR007595">
    <property type="entry name" value="Csa"/>
</dbReference>
<dbReference type="InterPro" id="IPR038641">
    <property type="entry name" value="Csa_sf"/>
</dbReference>
<dbReference type="NCBIfam" id="TIGR01742">
    <property type="entry name" value="SA_tandem_lipo"/>
    <property type="match status" value="1"/>
</dbReference>
<dbReference type="Pfam" id="PF04507">
    <property type="entry name" value="DUF576"/>
    <property type="match status" value="1"/>
</dbReference>
<dbReference type="PROSITE" id="PS51257">
    <property type="entry name" value="PROKAR_LIPOPROTEIN"/>
    <property type="match status" value="1"/>
</dbReference>
<name>Y052_STAA8</name>
<gene>
    <name type="ordered locus">SAOUHSC_00052</name>
</gene>
<organism>
    <name type="scientific">Staphylococcus aureus (strain NCTC 8325 / PS 47)</name>
    <dbReference type="NCBI Taxonomy" id="93061"/>
    <lineage>
        <taxon>Bacteria</taxon>
        <taxon>Bacillati</taxon>
        <taxon>Bacillota</taxon>
        <taxon>Bacilli</taxon>
        <taxon>Bacillales</taxon>
        <taxon>Staphylococcaceae</taxon>
        <taxon>Staphylococcus</taxon>
    </lineage>
</organism>
<protein>
    <recommendedName>
        <fullName>Uncharacterized lipoprotein SAOUHSC_00052</fullName>
    </recommendedName>
</protein>